<organism>
    <name type="scientific">Rattus norvegicus</name>
    <name type="common">Rat</name>
    <dbReference type="NCBI Taxonomy" id="10116"/>
    <lineage>
        <taxon>Eukaryota</taxon>
        <taxon>Metazoa</taxon>
        <taxon>Chordata</taxon>
        <taxon>Craniata</taxon>
        <taxon>Vertebrata</taxon>
        <taxon>Euteleostomi</taxon>
        <taxon>Mammalia</taxon>
        <taxon>Eutheria</taxon>
        <taxon>Euarchontoglires</taxon>
        <taxon>Glires</taxon>
        <taxon>Rodentia</taxon>
        <taxon>Myomorpha</taxon>
        <taxon>Muroidea</taxon>
        <taxon>Muridae</taxon>
        <taxon>Murinae</taxon>
        <taxon>Rattus</taxon>
    </lineage>
</organism>
<feature type="chain" id="PRO_0000417532" description="Kelch-like protein 3">
    <location>
        <begin position="1"/>
        <end position="587"/>
    </location>
</feature>
<feature type="domain" description="BTB" evidence="3">
    <location>
        <begin position="50"/>
        <end position="117"/>
    </location>
</feature>
<feature type="domain" description="BACK">
    <location>
        <begin position="152"/>
        <end position="254"/>
    </location>
</feature>
<feature type="repeat" description="Kelch 1">
    <location>
        <begin position="302"/>
        <end position="347"/>
    </location>
</feature>
<feature type="repeat" description="Kelch 2">
    <location>
        <begin position="348"/>
        <end position="394"/>
    </location>
</feature>
<feature type="repeat" description="Kelch 3">
    <location>
        <begin position="396"/>
        <end position="441"/>
    </location>
</feature>
<feature type="repeat" description="Kelch 4">
    <location>
        <begin position="442"/>
        <end position="490"/>
    </location>
</feature>
<feature type="repeat" description="Kelch 5">
    <location>
        <begin position="491"/>
        <end position="537"/>
    </location>
</feature>
<feature type="repeat" description="Kelch 6">
    <location>
        <begin position="539"/>
        <end position="585"/>
    </location>
</feature>
<feature type="region of interest" description="Disordered" evidence="4">
    <location>
        <begin position="1"/>
        <end position="24"/>
    </location>
</feature>
<feature type="modified residue" description="Phosphothreonine" evidence="2">
    <location>
        <position position="295"/>
    </location>
</feature>
<feature type="modified residue" description="Phosphothreonine" evidence="2">
    <location>
        <position position="375"/>
    </location>
</feature>
<feature type="modified residue" description="Phosphoserine" evidence="2">
    <location>
        <position position="376"/>
    </location>
</feature>
<feature type="modified residue" description="Phosphoserine" evidence="2">
    <location>
        <position position="433"/>
    </location>
</feature>
<dbReference type="EMBL" id="CB614643">
    <property type="status" value="NOT_ANNOTATED_CDS"/>
    <property type="molecule type" value="mRNA"/>
</dbReference>
<dbReference type="SMR" id="F1LZ52"/>
<dbReference type="FunCoup" id="F1LZ52">
    <property type="interactions" value="932"/>
</dbReference>
<dbReference type="STRING" id="10116.ENSRNOP00000037981"/>
<dbReference type="PhosphoSitePlus" id="F1LZ52"/>
<dbReference type="PaxDb" id="10116-ENSRNOP00000037981"/>
<dbReference type="AGR" id="RGD:1565218"/>
<dbReference type="RGD" id="1565218">
    <property type="gene designation" value="Klhl3"/>
</dbReference>
<dbReference type="eggNOG" id="KOG4441">
    <property type="taxonomic scope" value="Eukaryota"/>
</dbReference>
<dbReference type="InParanoid" id="F1LZ52"/>
<dbReference type="Reactome" id="R-RNO-8951664">
    <property type="pathway name" value="Neddylation"/>
</dbReference>
<dbReference type="Reactome" id="R-RNO-983168">
    <property type="pathway name" value="Antigen processing: Ubiquitination &amp; Proteasome degradation"/>
</dbReference>
<dbReference type="UniPathway" id="UPA00143"/>
<dbReference type="PRO" id="PR:F1LZ52"/>
<dbReference type="Proteomes" id="UP000002494">
    <property type="component" value="Unplaced"/>
</dbReference>
<dbReference type="GO" id="GO:0031463">
    <property type="term" value="C:Cul3-RING ubiquitin ligase complex"/>
    <property type="evidence" value="ECO:0000250"/>
    <property type="project" value="UniProtKB"/>
</dbReference>
<dbReference type="GO" id="GO:0005737">
    <property type="term" value="C:cytoplasm"/>
    <property type="evidence" value="ECO:0000318"/>
    <property type="project" value="GO_Central"/>
</dbReference>
<dbReference type="GO" id="GO:0005856">
    <property type="term" value="C:cytoskeleton"/>
    <property type="evidence" value="ECO:0007669"/>
    <property type="project" value="UniProtKB-SubCell"/>
</dbReference>
<dbReference type="GO" id="GO:0005829">
    <property type="term" value="C:cytosol"/>
    <property type="evidence" value="ECO:0000250"/>
    <property type="project" value="UniProtKB"/>
</dbReference>
<dbReference type="GO" id="GO:0003779">
    <property type="term" value="F:actin binding"/>
    <property type="evidence" value="ECO:0007669"/>
    <property type="project" value="UniProtKB-KW"/>
</dbReference>
<dbReference type="GO" id="GO:0097602">
    <property type="term" value="F:cullin family protein binding"/>
    <property type="evidence" value="ECO:0000266"/>
    <property type="project" value="RGD"/>
</dbReference>
<dbReference type="GO" id="GO:1990756">
    <property type="term" value="F:ubiquitin-like ligase-substrate adaptor activity"/>
    <property type="evidence" value="ECO:0000250"/>
    <property type="project" value="UniProtKB"/>
</dbReference>
<dbReference type="GO" id="GO:0072156">
    <property type="term" value="P:distal tubule morphogenesis"/>
    <property type="evidence" value="ECO:0000250"/>
    <property type="project" value="UniProtKB"/>
</dbReference>
<dbReference type="GO" id="GO:0010467">
    <property type="term" value="P:gene expression"/>
    <property type="evidence" value="ECO:0000266"/>
    <property type="project" value="RGD"/>
</dbReference>
<dbReference type="GO" id="GO:0050801">
    <property type="term" value="P:monoatomic ion homeostasis"/>
    <property type="evidence" value="ECO:0000250"/>
    <property type="project" value="UniProtKB"/>
</dbReference>
<dbReference type="GO" id="GO:0055075">
    <property type="term" value="P:potassium ion homeostasis"/>
    <property type="evidence" value="ECO:0000266"/>
    <property type="project" value="RGD"/>
</dbReference>
<dbReference type="GO" id="GO:0043161">
    <property type="term" value="P:proteasome-mediated ubiquitin-dependent protein catabolic process"/>
    <property type="evidence" value="ECO:0000266"/>
    <property type="project" value="RGD"/>
</dbReference>
<dbReference type="GO" id="GO:0030163">
    <property type="term" value="P:protein catabolic process"/>
    <property type="evidence" value="ECO:0000266"/>
    <property type="project" value="RGD"/>
</dbReference>
<dbReference type="GO" id="GO:0070936">
    <property type="term" value="P:protein K48-linked ubiquitination"/>
    <property type="evidence" value="ECO:0000250"/>
    <property type="project" value="UniProtKB"/>
</dbReference>
<dbReference type="GO" id="GO:0000209">
    <property type="term" value="P:protein polyubiquitination"/>
    <property type="evidence" value="ECO:0000266"/>
    <property type="project" value="RGD"/>
</dbReference>
<dbReference type="GO" id="GO:0016567">
    <property type="term" value="P:protein ubiquitination"/>
    <property type="evidence" value="ECO:0000250"/>
    <property type="project" value="UniProtKB"/>
</dbReference>
<dbReference type="GO" id="GO:0070293">
    <property type="term" value="P:renal absorption"/>
    <property type="evidence" value="ECO:0000266"/>
    <property type="project" value="RGD"/>
</dbReference>
<dbReference type="GO" id="GO:0070294">
    <property type="term" value="P:renal sodium ion absorption"/>
    <property type="evidence" value="ECO:0000250"/>
    <property type="project" value="UniProtKB"/>
</dbReference>
<dbReference type="GO" id="GO:0006511">
    <property type="term" value="P:ubiquitin-dependent protein catabolic process"/>
    <property type="evidence" value="ECO:0000250"/>
    <property type="project" value="UniProtKB"/>
</dbReference>
<dbReference type="CDD" id="cd18513">
    <property type="entry name" value="BACK_KLHL3"/>
    <property type="match status" value="1"/>
</dbReference>
<dbReference type="CDD" id="cd18339">
    <property type="entry name" value="BTB_POZ_KLHL3"/>
    <property type="match status" value="1"/>
</dbReference>
<dbReference type="FunFam" id="1.25.40.420:FF:000001">
    <property type="entry name" value="Kelch-like family member 12"/>
    <property type="match status" value="1"/>
</dbReference>
<dbReference type="FunFam" id="2.120.10.80:FF:000002">
    <property type="entry name" value="Kelch-like family member 2"/>
    <property type="match status" value="1"/>
</dbReference>
<dbReference type="FunFam" id="3.30.710.10:FF:000001">
    <property type="entry name" value="Kelch-like family member 20"/>
    <property type="match status" value="1"/>
</dbReference>
<dbReference type="Gene3D" id="1.25.40.420">
    <property type="match status" value="1"/>
</dbReference>
<dbReference type="Gene3D" id="2.120.10.80">
    <property type="entry name" value="Kelch-type beta propeller"/>
    <property type="match status" value="1"/>
</dbReference>
<dbReference type="Gene3D" id="3.30.710.10">
    <property type="entry name" value="Potassium Channel Kv1.1, Chain A"/>
    <property type="match status" value="1"/>
</dbReference>
<dbReference type="InterPro" id="IPR011705">
    <property type="entry name" value="BACK"/>
</dbReference>
<dbReference type="InterPro" id="IPR017096">
    <property type="entry name" value="BTB-kelch_protein"/>
</dbReference>
<dbReference type="InterPro" id="IPR000210">
    <property type="entry name" value="BTB/POZ_dom"/>
</dbReference>
<dbReference type="InterPro" id="IPR015915">
    <property type="entry name" value="Kelch-typ_b-propeller"/>
</dbReference>
<dbReference type="InterPro" id="IPR006652">
    <property type="entry name" value="Kelch_1"/>
</dbReference>
<dbReference type="InterPro" id="IPR030578">
    <property type="entry name" value="KLHL3_BACK"/>
</dbReference>
<dbReference type="InterPro" id="IPR011333">
    <property type="entry name" value="SKP1/BTB/POZ_sf"/>
</dbReference>
<dbReference type="PANTHER" id="PTHR24412">
    <property type="entry name" value="KELCH PROTEIN"/>
    <property type="match status" value="1"/>
</dbReference>
<dbReference type="PANTHER" id="PTHR24412:SF179">
    <property type="entry name" value="KELCH-LIKE PROTEIN 3"/>
    <property type="match status" value="1"/>
</dbReference>
<dbReference type="Pfam" id="PF07707">
    <property type="entry name" value="BACK"/>
    <property type="match status" value="1"/>
</dbReference>
<dbReference type="Pfam" id="PF00651">
    <property type="entry name" value="BTB"/>
    <property type="match status" value="1"/>
</dbReference>
<dbReference type="Pfam" id="PF01344">
    <property type="entry name" value="Kelch_1"/>
    <property type="match status" value="6"/>
</dbReference>
<dbReference type="PIRSF" id="PIRSF037037">
    <property type="entry name" value="Kelch-like_protein_gigaxonin"/>
    <property type="match status" value="1"/>
</dbReference>
<dbReference type="PRINTS" id="PR00501">
    <property type="entry name" value="KELCHREPEAT"/>
</dbReference>
<dbReference type="SMART" id="SM00875">
    <property type="entry name" value="BACK"/>
    <property type="match status" value="1"/>
</dbReference>
<dbReference type="SMART" id="SM00225">
    <property type="entry name" value="BTB"/>
    <property type="match status" value="1"/>
</dbReference>
<dbReference type="SMART" id="SM00612">
    <property type="entry name" value="Kelch"/>
    <property type="match status" value="6"/>
</dbReference>
<dbReference type="SUPFAM" id="SSF117281">
    <property type="entry name" value="Kelch motif"/>
    <property type="match status" value="1"/>
</dbReference>
<dbReference type="SUPFAM" id="SSF54695">
    <property type="entry name" value="POZ domain"/>
    <property type="match status" value="1"/>
</dbReference>
<dbReference type="PROSITE" id="PS50097">
    <property type="entry name" value="BTB"/>
    <property type="match status" value="1"/>
</dbReference>
<protein>
    <recommendedName>
        <fullName>Kelch-like protein 3</fullName>
    </recommendedName>
</protein>
<proteinExistence type="evidence at transcript level"/>
<keyword id="KW-0009">Actin-binding</keyword>
<keyword id="KW-0963">Cytoplasm</keyword>
<keyword id="KW-0206">Cytoskeleton</keyword>
<keyword id="KW-0880">Kelch repeat</keyword>
<keyword id="KW-0597">Phosphoprotein</keyword>
<keyword id="KW-1185">Reference proteome</keyword>
<keyword id="KW-0677">Repeat</keyword>
<keyword id="KW-0833">Ubl conjugation pathway</keyword>
<sequence length="587" mass="64845">MEGESVKPSPQPTEQAGDGEKNRRMITVNPAHMGKAFKVMNELRSKRLLCDVMIVAEDVEVEAHRVVLAACSPYFCAMFTGDMSESKAKKIEIKDVDGQTLSKLIDYIYTAEIEVTEENVQVLLPAASLLQLMDVRQNCCDFLQSQLHPTNCLGIRAFADVHTCTDLLQQANAYAEQHFPEVMLGEEFLSLSLDQVCSLISSDKLTVSSEEKVFEAVISWINYEKETRLDHMAKLMEHVRLPLLPRDYLVQTVEEEALIKNNNTCKDFLIEAMKYHLLPLDQRLLIKNPRTKPRTPVSLPKVMIVVGGQAPKAIRSVECYDFEEGRWDQIAELPSRRCRAGVVFMAGHVYAVGGFNGSLRVRTVDVYDGVKDQWTSIASMQERRSTLGAAVLNDLLYAVGGFDGSTGLASVEAYSYKTNEWFFVAPMNTRRSSVGVGVVEGKLYAVGGYDGASRQCLSTVEQYNPATNEWIYVADMSTRRSGAGVGVLSGQLYATGGHDGPLVRKSVEVYDPGTNTWKQVADMNMCRRNAGVCAVNGLLYVVGGDDGSCNLASVEYYNPVTDKWTLLPTNMSTGRSYAGQWVSASGA</sequence>
<name>KLHL3_RAT</name>
<reference key="1">
    <citation type="journal article" date="2004" name="Nature">
        <title>Genome sequence of the Brown Norway rat yields insights into mammalian evolution.</title>
        <authorList>
            <person name="Gibbs R.A."/>
            <person name="Weinstock G.M."/>
            <person name="Metzker M.L."/>
            <person name="Muzny D.M."/>
            <person name="Sodergren E.J."/>
            <person name="Scherer S."/>
            <person name="Scott G."/>
            <person name="Steffen D."/>
            <person name="Worley K.C."/>
            <person name="Burch P.E."/>
            <person name="Okwuonu G."/>
            <person name="Hines S."/>
            <person name="Lewis L."/>
            <person name="Deramo C."/>
            <person name="Delgado O."/>
            <person name="Dugan-Rocha S."/>
            <person name="Miner G."/>
            <person name="Morgan M."/>
            <person name="Hawes A."/>
            <person name="Gill R."/>
            <person name="Holt R.A."/>
            <person name="Adams M.D."/>
            <person name="Amanatides P.G."/>
            <person name="Baden-Tillson H."/>
            <person name="Barnstead M."/>
            <person name="Chin S."/>
            <person name="Evans C.A."/>
            <person name="Ferriera S."/>
            <person name="Fosler C."/>
            <person name="Glodek A."/>
            <person name="Gu Z."/>
            <person name="Jennings D."/>
            <person name="Kraft C.L."/>
            <person name="Nguyen T."/>
            <person name="Pfannkoch C.M."/>
            <person name="Sitter C."/>
            <person name="Sutton G.G."/>
            <person name="Venter J.C."/>
            <person name="Woodage T."/>
            <person name="Smith D."/>
            <person name="Lee H.-M."/>
            <person name="Gustafson E."/>
            <person name="Cahill P."/>
            <person name="Kana A."/>
            <person name="Doucette-Stamm L."/>
            <person name="Weinstock K."/>
            <person name="Fechtel K."/>
            <person name="Weiss R.B."/>
            <person name="Dunn D.M."/>
            <person name="Green E.D."/>
            <person name="Blakesley R.W."/>
            <person name="Bouffard G.G."/>
            <person name="De Jong P.J."/>
            <person name="Osoegawa K."/>
            <person name="Zhu B."/>
            <person name="Marra M."/>
            <person name="Schein J."/>
            <person name="Bosdet I."/>
            <person name="Fjell C."/>
            <person name="Jones S."/>
            <person name="Krzywinski M."/>
            <person name="Mathewson C."/>
            <person name="Siddiqui A."/>
            <person name="Wye N."/>
            <person name="McPherson J."/>
            <person name="Zhao S."/>
            <person name="Fraser C.M."/>
            <person name="Shetty J."/>
            <person name="Shatsman S."/>
            <person name="Geer K."/>
            <person name="Chen Y."/>
            <person name="Abramzon S."/>
            <person name="Nierman W.C."/>
            <person name="Havlak P.H."/>
            <person name="Chen R."/>
            <person name="Durbin K.J."/>
            <person name="Egan A."/>
            <person name="Ren Y."/>
            <person name="Song X.-Z."/>
            <person name="Li B."/>
            <person name="Liu Y."/>
            <person name="Qin X."/>
            <person name="Cawley S."/>
            <person name="Cooney A.J."/>
            <person name="D'Souza L.M."/>
            <person name="Martin K."/>
            <person name="Wu J.Q."/>
            <person name="Gonzalez-Garay M.L."/>
            <person name="Jackson A.R."/>
            <person name="Kalafus K.J."/>
            <person name="McLeod M.P."/>
            <person name="Milosavljevic A."/>
            <person name="Virk D."/>
            <person name="Volkov A."/>
            <person name="Wheeler D.A."/>
            <person name="Zhang Z."/>
            <person name="Bailey J.A."/>
            <person name="Eichler E.E."/>
            <person name="Tuzun E."/>
            <person name="Birney E."/>
            <person name="Mongin E."/>
            <person name="Ureta-Vidal A."/>
            <person name="Woodwark C."/>
            <person name="Zdobnov E."/>
            <person name="Bork P."/>
            <person name="Suyama M."/>
            <person name="Torrents D."/>
            <person name="Alexandersson M."/>
            <person name="Trask B.J."/>
            <person name="Young J.M."/>
            <person name="Huang H."/>
            <person name="Wang H."/>
            <person name="Xing H."/>
            <person name="Daniels S."/>
            <person name="Gietzen D."/>
            <person name="Schmidt J."/>
            <person name="Stevens K."/>
            <person name="Vitt U."/>
            <person name="Wingrove J."/>
            <person name="Camara F."/>
            <person name="Mar Alba M."/>
            <person name="Abril J.F."/>
            <person name="Guigo R."/>
            <person name="Smit A."/>
            <person name="Dubchak I."/>
            <person name="Rubin E.M."/>
            <person name="Couronne O."/>
            <person name="Poliakov A."/>
            <person name="Huebner N."/>
            <person name="Ganten D."/>
            <person name="Goesele C."/>
            <person name="Hummel O."/>
            <person name="Kreitler T."/>
            <person name="Lee Y.-A."/>
            <person name="Monti J."/>
            <person name="Schulz H."/>
            <person name="Zimdahl H."/>
            <person name="Himmelbauer H."/>
            <person name="Lehrach H."/>
            <person name="Jacob H.J."/>
            <person name="Bromberg S."/>
            <person name="Gullings-Handley J."/>
            <person name="Jensen-Seaman M.I."/>
            <person name="Kwitek A.E."/>
            <person name="Lazar J."/>
            <person name="Pasko D."/>
            <person name="Tonellato P.J."/>
            <person name="Twigger S."/>
            <person name="Ponting C.P."/>
            <person name="Duarte J.M."/>
            <person name="Rice S."/>
            <person name="Goodstadt L."/>
            <person name="Beatson S.A."/>
            <person name="Emes R.D."/>
            <person name="Winter E.E."/>
            <person name="Webber C."/>
            <person name="Brandt P."/>
            <person name="Nyakatura G."/>
            <person name="Adetobi M."/>
            <person name="Chiaromonte F."/>
            <person name="Elnitski L."/>
            <person name="Eswara P."/>
            <person name="Hardison R.C."/>
            <person name="Hou M."/>
            <person name="Kolbe D."/>
            <person name="Makova K."/>
            <person name="Miller W."/>
            <person name="Nekrutenko A."/>
            <person name="Riemer C."/>
            <person name="Schwartz S."/>
            <person name="Taylor J."/>
            <person name="Yang S."/>
            <person name="Zhang Y."/>
            <person name="Lindpaintner K."/>
            <person name="Andrews T.D."/>
            <person name="Caccamo M."/>
            <person name="Clamp M."/>
            <person name="Clarke L."/>
            <person name="Curwen V."/>
            <person name="Durbin R.M."/>
            <person name="Eyras E."/>
            <person name="Searle S.M."/>
            <person name="Cooper G.M."/>
            <person name="Batzoglou S."/>
            <person name="Brudno M."/>
            <person name="Sidow A."/>
            <person name="Stone E.A."/>
            <person name="Payseur B.A."/>
            <person name="Bourque G."/>
            <person name="Lopez-Otin C."/>
            <person name="Puente X.S."/>
            <person name="Chakrabarti K."/>
            <person name="Chatterji S."/>
            <person name="Dewey C."/>
            <person name="Pachter L."/>
            <person name="Bray N."/>
            <person name="Yap V.B."/>
            <person name="Caspi A."/>
            <person name="Tesler G."/>
            <person name="Pevzner P.A."/>
            <person name="Haussler D."/>
            <person name="Roskin K.M."/>
            <person name="Baertsch R."/>
            <person name="Clawson H."/>
            <person name="Furey T.S."/>
            <person name="Hinrichs A.S."/>
            <person name="Karolchik D."/>
            <person name="Kent W.J."/>
            <person name="Rosenbloom K.R."/>
            <person name="Trumbower H."/>
            <person name="Weirauch M."/>
            <person name="Cooper D.N."/>
            <person name="Stenson P.D."/>
            <person name="Ma B."/>
            <person name="Brent M."/>
            <person name="Arumugam M."/>
            <person name="Shteynberg D."/>
            <person name="Copley R.R."/>
            <person name="Taylor M.S."/>
            <person name="Riethman H."/>
            <person name="Mudunuri U."/>
            <person name="Peterson J."/>
            <person name="Guyer M."/>
            <person name="Felsenfeld A."/>
            <person name="Old S."/>
            <person name="Mockrin S."/>
            <person name="Collins F.S."/>
        </authorList>
    </citation>
    <scope>NUCLEOTIDE SEQUENCE [LARGE SCALE GENOMIC DNA]</scope>
    <source>
        <strain>Brown Norway</strain>
    </source>
</reference>
<reference key="2">
    <citation type="submission" date="2003-04" db="EMBL/GenBank/DDBJ databases">
        <title>Amgen rat EST program.</title>
        <authorList>
            <consortium name="Amgen EST program"/>
        </authorList>
    </citation>
    <scope>NUCLEOTIDE SEQUENCE [LARGE SCALE MRNA] OF 1-20</scope>
</reference>
<accession>F1LZ52</accession>
<evidence type="ECO:0000250" key="1">
    <source>
        <dbReference type="UniProtKB" id="E0CZ16"/>
    </source>
</evidence>
<evidence type="ECO:0000250" key="2">
    <source>
        <dbReference type="UniProtKB" id="Q9UH77"/>
    </source>
</evidence>
<evidence type="ECO:0000255" key="3">
    <source>
        <dbReference type="PROSITE-ProRule" id="PRU00037"/>
    </source>
</evidence>
<evidence type="ECO:0000256" key="4">
    <source>
        <dbReference type="SAM" id="MobiDB-lite"/>
    </source>
</evidence>
<evidence type="ECO:0000305" key="5"/>
<comment type="function">
    <text evidence="1 2">Substrate-specific adapter of a BCR (BTB-CUL3-RBX1) E3 ubiquitin ligase complex that acts as a regulator of ion transport in the distal nephron. The BCR(KLHL3) complex acts by mediating ubiquitination and degradation of WNK1 and WNK4, two activators of Na-Cl cotransporter SLC12A3/NCC in distal convoluted tubule cells of kidney, thereby regulating NaCl reabsorption. The BCR(KLHL3) complex also mediates ubiquitination and degradation of WNK3 (By similarity). The BCR(KLHL3) complex also mediates ubiquitination of CLDN8, a tight-junction protein required for paracellular chloride transport in the kidney, leading to its degradation (By similarity).</text>
</comment>
<comment type="pathway">
    <text evidence="2">Protein modification; protein ubiquitination.</text>
</comment>
<comment type="subunit">
    <text evidence="1 2">Homodimer. Component of the BCR(KLHL3) E3 ubiquitin ligase complex, at least composed of CUL3 and KLHL3 and RBX1 (By similarity). Interacts with CLDN8 (By similarity).</text>
</comment>
<comment type="subcellular location">
    <subcellularLocation>
        <location evidence="2">Cytoplasm</location>
        <location evidence="2">Cytoskeleton</location>
    </subcellularLocation>
    <subcellularLocation>
        <location evidence="2">Cytoplasm</location>
        <location evidence="2">Cytosol</location>
    </subcellularLocation>
</comment>
<comment type="PTM">
    <text evidence="2">Phosphorylation at Ser-433 by PKA or PKC decreases the interaction with WNK1 and WNK4, leading to inhibit their degradation by the BCR(KLHL3) complex. Phosphorylated at Ser-433 by PKC in response to angiotensin II signaling, decreasing ability to promote degradation of WNK1 and WNK4, leading to activation of Na-Cl cotransporter SLC12A3/NCC. Phosphorylation at Ser-433 is increased by insulin. Dephosphorylated at Ser-433 by calcineurin PPP3CA, promoting degradation of WNK1 and WNK4.</text>
</comment>
<comment type="similarity">
    <text evidence="5">Belongs to the KLHL3 family.</text>
</comment>
<gene>
    <name type="primary">Klhl3</name>
</gene>